<proteinExistence type="evidence at transcript level"/>
<dbReference type="EMBL" id="DQ345369">
    <property type="protein sequence ID" value="ABC74977.1"/>
    <property type="molecule type" value="mRNA"/>
</dbReference>
<dbReference type="EMBL" id="DQ141148">
    <property type="protein sequence ID" value="AAZ83749.1"/>
    <property type="molecule type" value="mRNA"/>
</dbReference>
<dbReference type="SMR" id="Q2I2R3"/>
<dbReference type="ConoServer" id="1110">
    <property type="toxin name" value="LtVIB precursor"/>
</dbReference>
<dbReference type="ConoServer" id="1155">
    <property type="toxin name" value="LtVIB precursor"/>
</dbReference>
<dbReference type="GO" id="GO:0005576">
    <property type="term" value="C:extracellular region"/>
    <property type="evidence" value="ECO:0007669"/>
    <property type="project" value="UniProtKB-SubCell"/>
</dbReference>
<dbReference type="GO" id="GO:0008200">
    <property type="term" value="F:ion channel inhibitor activity"/>
    <property type="evidence" value="ECO:0007669"/>
    <property type="project" value="InterPro"/>
</dbReference>
<dbReference type="GO" id="GO:0090729">
    <property type="term" value="F:toxin activity"/>
    <property type="evidence" value="ECO:0007669"/>
    <property type="project" value="UniProtKB-KW"/>
</dbReference>
<dbReference type="InterPro" id="IPR004214">
    <property type="entry name" value="Conotoxin"/>
</dbReference>
<dbReference type="Pfam" id="PF02950">
    <property type="entry name" value="Conotoxin"/>
    <property type="match status" value="1"/>
</dbReference>
<feature type="signal peptide" evidence="2">
    <location>
        <begin position="1"/>
        <end position="24"/>
    </location>
</feature>
<feature type="propeptide" id="PRO_0000315494" evidence="1">
    <location>
        <begin position="25"/>
        <end position="47"/>
    </location>
</feature>
<feature type="peptide" id="PRO_0000315495" description="Conotoxin Lt6.2">
    <location>
        <begin position="48"/>
        <end position="80"/>
    </location>
</feature>
<feature type="disulfide bond" evidence="1">
    <location>
        <begin position="48"/>
        <end position="62"/>
    </location>
</feature>
<feature type="disulfide bond" evidence="1">
    <location>
        <begin position="55"/>
        <end position="66"/>
    </location>
</feature>
<feature type="disulfide bond" evidence="1">
    <location>
        <begin position="61"/>
        <end position="73"/>
    </location>
</feature>
<feature type="sequence conflict" description="In Ref. 2; AAZ83749." evidence="3" ref="2">
    <original>R</original>
    <variation>C</variation>
    <location>
        <position position="5"/>
    </location>
</feature>
<comment type="subcellular location">
    <subcellularLocation>
        <location evidence="1">Secreted</location>
    </subcellularLocation>
</comment>
<comment type="tissue specificity">
    <text>Expressed by the venom duct.</text>
</comment>
<comment type="domain">
    <text evidence="1">The presence of a 'disulfide through disulfide knot' structurally defines this protein as a knottin.</text>
</comment>
<comment type="domain">
    <text>The cysteine framework is VI/VII (C-C-CC-C-C).</text>
</comment>
<comment type="similarity">
    <text evidence="3">Belongs to the conotoxin O1 superfamily.</text>
</comment>
<keyword id="KW-1015">Disulfide bond</keyword>
<keyword id="KW-0960">Knottin</keyword>
<keyword id="KW-0964">Secreted</keyword>
<keyword id="KW-0732">Signal</keyword>
<keyword id="KW-0800">Toxin</keyword>
<protein>
    <recommendedName>
        <fullName>Conotoxin Lt6.2</fullName>
    </recommendedName>
    <alternativeName>
        <fullName>Conotoxin LeD41</fullName>
    </alternativeName>
    <alternativeName>
        <fullName>Lt6b</fullName>
    </alternativeName>
</protein>
<name>O162_CONLT</name>
<reference key="1">
    <citation type="journal article" date="2006" name="Genomics">
        <title>Diversity and evolution of conotoxins based on gene expression profiling of Conus litteratus.</title>
        <authorList>
            <person name="Pi C."/>
            <person name="Liu J."/>
            <person name="Peng C."/>
            <person name="Liu Y."/>
            <person name="Jiang X."/>
            <person name="Zhao Y."/>
            <person name="Tang S."/>
            <person name="Wang L."/>
            <person name="Dong M."/>
            <person name="Chen S."/>
            <person name="Xu A."/>
        </authorList>
    </citation>
    <scope>NUCLEOTIDE SEQUENCE [MRNA]</scope>
    <source>
        <tissue>Venom duct</tissue>
    </source>
</reference>
<reference key="2">
    <citation type="submission" date="2005-07" db="EMBL/GenBank/DDBJ databases">
        <title>Novel O-superfamily conotoxins, and their coding polynucleotides and use.</title>
        <authorList>
            <person name="Luo S."/>
            <person name="Zhangsun D."/>
            <person name="Zhang B."/>
            <person name="Lin Q."/>
        </authorList>
    </citation>
    <scope>NUCLEOTIDE SEQUENCE [MRNA]</scope>
    <source>
        <tissue>Venom duct</tissue>
    </source>
</reference>
<evidence type="ECO:0000250" key="1"/>
<evidence type="ECO:0000255" key="2"/>
<evidence type="ECO:0000305" key="3"/>
<organism>
    <name type="scientific">Conus litteratus</name>
    <name type="common">Lettered cone</name>
    <dbReference type="NCBI Taxonomy" id="89445"/>
    <lineage>
        <taxon>Eukaryota</taxon>
        <taxon>Metazoa</taxon>
        <taxon>Spiralia</taxon>
        <taxon>Lophotrochozoa</taxon>
        <taxon>Mollusca</taxon>
        <taxon>Gastropoda</taxon>
        <taxon>Caenogastropoda</taxon>
        <taxon>Neogastropoda</taxon>
        <taxon>Conoidea</taxon>
        <taxon>Conidae</taxon>
        <taxon>Conus</taxon>
        <taxon>Elisaconus</taxon>
    </lineage>
</organism>
<accession>Q2I2R3</accession>
<accession>Q3YEG5</accession>
<sequence>MKLTRVLIIAVLFLTAYQLTTVETYSRGKWMHRALRSTGKNPKVTRECSSPDESCTYHYNCCQLYCNKEENVCLENSPEV</sequence>